<name>DNLJ_HALVD</name>
<gene>
    <name evidence="5" type="primary">ligN</name>
    <name evidence="1" type="synonym">ligA</name>
    <name evidence="6" type="ordered locus">HVO_3000</name>
    <name evidence="7" type="ORF">C498_18165</name>
</gene>
<feature type="chain" id="PRO_0000430565" description="DNA ligase">
    <location>
        <begin position="1"/>
        <end position="699"/>
    </location>
</feature>
<feature type="domain" description="BRCT" evidence="1">
    <location>
        <begin position="613"/>
        <end position="666"/>
    </location>
</feature>
<feature type="region of interest" description="Disordered" evidence="2">
    <location>
        <begin position="1"/>
        <end position="29"/>
    </location>
</feature>
<feature type="active site" description="N6-AMP-lysine intermediate" evidence="1">
    <location>
        <position position="139"/>
    </location>
</feature>
<feature type="binding site" evidence="1">
    <location>
        <begin position="60"/>
        <end position="64"/>
    </location>
    <ligand>
        <name>NAD(+)</name>
        <dbReference type="ChEBI" id="CHEBI:57540"/>
    </ligand>
</feature>
<feature type="binding site" evidence="1">
    <location>
        <begin position="108"/>
        <end position="109"/>
    </location>
    <ligand>
        <name>NAD(+)</name>
        <dbReference type="ChEBI" id="CHEBI:57540"/>
    </ligand>
</feature>
<feature type="binding site" evidence="1">
    <location>
        <position position="137"/>
    </location>
    <ligand>
        <name>NAD(+)</name>
        <dbReference type="ChEBI" id="CHEBI:57540"/>
    </ligand>
</feature>
<feature type="binding site" evidence="1">
    <location>
        <position position="160"/>
    </location>
    <ligand>
        <name>NAD(+)</name>
        <dbReference type="ChEBI" id="CHEBI:57540"/>
    </ligand>
</feature>
<feature type="binding site" evidence="1">
    <location>
        <position position="196"/>
    </location>
    <ligand>
        <name>NAD(+)</name>
        <dbReference type="ChEBI" id="CHEBI:57540"/>
    </ligand>
</feature>
<feature type="binding site" evidence="1">
    <location>
        <position position="311"/>
    </location>
    <ligand>
        <name>NAD(+)</name>
        <dbReference type="ChEBI" id="CHEBI:57540"/>
    </ligand>
</feature>
<feature type="binding site" evidence="1">
    <location>
        <position position="335"/>
    </location>
    <ligand>
        <name>NAD(+)</name>
        <dbReference type="ChEBI" id="CHEBI:57540"/>
    </ligand>
</feature>
<feature type="binding site" evidence="1">
    <location>
        <position position="425"/>
    </location>
    <ligand>
        <name>Zn(2+)</name>
        <dbReference type="ChEBI" id="CHEBI:29105"/>
    </ligand>
</feature>
<feature type="binding site" evidence="1">
    <location>
        <position position="428"/>
    </location>
    <ligand>
        <name>Zn(2+)</name>
        <dbReference type="ChEBI" id="CHEBI:29105"/>
    </ligand>
</feature>
<feature type="binding site" evidence="1">
    <location>
        <position position="441"/>
    </location>
    <ligand>
        <name>Zn(2+)</name>
        <dbReference type="ChEBI" id="CHEBI:29105"/>
    </ligand>
</feature>
<feature type="binding site" evidence="1">
    <location>
        <position position="447"/>
    </location>
    <ligand>
        <name>Zn(2+)</name>
        <dbReference type="ChEBI" id="CHEBI:29105"/>
    </ligand>
</feature>
<feature type="mutagenesis site" description="Lack of activity." evidence="4">
    <original>K</original>
    <variation>A</variation>
    <location>
        <position position="139"/>
    </location>
</feature>
<feature type="mutagenesis site" description="Lack of activity." evidence="4">
    <original>D</original>
    <variation>A</variation>
    <location>
        <position position="141"/>
    </location>
</feature>
<comment type="function">
    <text evidence="1 4">DNA ligase that catalyzes the formation of phosphodiester linkages between 5'-phosphoryl and 3'-hydroxyl groups in double-stranded DNA using NAD as a coenzyme and as the energy source for the reaction. It is essential for DNA replication and repair of damaged DNA.</text>
</comment>
<comment type="catalytic activity">
    <reaction evidence="1 4">
        <text>NAD(+) + (deoxyribonucleotide)n-3'-hydroxyl + 5'-phospho-(deoxyribonucleotide)m = (deoxyribonucleotide)n+m + AMP + beta-nicotinamide D-nucleotide.</text>
        <dbReference type="EC" id="6.5.1.2"/>
    </reaction>
</comment>
<comment type="cofactor">
    <cofactor evidence="1 4">
        <name>Mg(2+)</name>
        <dbReference type="ChEBI" id="CHEBI:18420"/>
    </cofactor>
    <cofactor evidence="1 4">
        <name>Mn(2+)</name>
        <dbReference type="ChEBI" id="CHEBI:29035"/>
    </cofactor>
</comment>
<comment type="activity regulation">
    <text evidence="4">Displays maximal in vitro activity at high salt levels.</text>
</comment>
<comment type="disruption phenotype">
    <text evidence="3">Deletion of both ligA and ligN is lethal.</text>
</comment>
<comment type="similarity">
    <text evidence="1">Belongs to the NAD-dependent DNA ligase family. LigA subfamily.</text>
</comment>
<reference key="1">
    <citation type="journal article" date="2010" name="PLoS ONE">
        <title>The complete genome sequence of Haloferax volcanii DS2, a model archaeon.</title>
        <authorList>
            <person name="Hartman A.L."/>
            <person name="Norais C."/>
            <person name="Badger J.H."/>
            <person name="Delmas S."/>
            <person name="Haldenby S."/>
            <person name="Madupu R."/>
            <person name="Robinson J."/>
            <person name="Khouri H."/>
            <person name="Ren Q."/>
            <person name="Lowe T.M."/>
            <person name="Maupin-Furlow J."/>
            <person name="Pohlschroder M."/>
            <person name="Daniels C."/>
            <person name="Pfeiffer F."/>
            <person name="Allers T."/>
            <person name="Eisen J.A."/>
        </authorList>
    </citation>
    <scope>NUCLEOTIDE SEQUENCE [LARGE SCALE GENOMIC DNA]</scope>
    <source>
        <strain>ATCC 29605 / DSM 3757 / JCM 8879 / NBRC 14742 / NCIMB 2012 / VKM B-1768 / DS2</strain>
    </source>
</reference>
<reference key="2">
    <citation type="journal article" date="2014" name="PLoS Genet.">
        <title>Phylogenetically driven sequencing of extremely halophilic archaea reveals strategies for static and dynamic osmo-response.</title>
        <authorList>
            <person name="Becker E.A."/>
            <person name="Seitzer P.M."/>
            <person name="Tritt A."/>
            <person name="Larsen D."/>
            <person name="Krusor M."/>
            <person name="Yao A.I."/>
            <person name="Wu D."/>
            <person name="Madern D."/>
            <person name="Eisen J.A."/>
            <person name="Darling A.E."/>
            <person name="Facciotti M.T."/>
        </authorList>
    </citation>
    <scope>NUCLEOTIDE SEQUENCE [LARGE SCALE GENOMIC DNA]</scope>
    <source>
        <strain>ATCC 29605 / DSM 3757 / JCM 8879 / NBRC 14742 / NCIMB 2012 / VKM B-1768 / DS2</strain>
    </source>
</reference>
<reference key="3">
    <citation type="journal article" date="2006" name="Mol. Microbiol.">
        <title>ATP- and NAD+-dependent DNA ligases share an essential function in the halophilic archaeon Haloferax volcanii.</title>
        <authorList>
            <person name="Zhao A."/>
            <person name="Gray F.C."/>
            <person name="MacNeill S.A."/>
        </authorList>
    </citation>
    <scope>DISRUPTION PHENOTYPE</scope>
    <scope>GENE NAME</scope>
</reference>
<reference key="4">
    <citation type="journal article" date="2006" name="BMC Mol. Biol.">
        <title>Biochemical characterisation of LigN, an NAD+-dependent DNA ligase from the halophilic euryarchaeon Haloferax volcanii that displays maximal in vitro activity at high salt concentrations.</title>
        <authorList>
            <person name="Poidevin L."/>
            <person name="MacNeill S.A."/>
        </authorList>
    </citation>
    <scope>FUNCTION</scope>
    <scope>CATALYTIC ACTIVITY</scope>
    <scope>COFACTOR</scope>
    <scope>ACTIVITY REGULATION</scope>
    <scope>MUTAGENESIS OF LYS-139 AND ASP-141</scope>
</reference>
<dbReference type="EC" id="6.5.1.2" evidence="1"/>
<dbReference type="EMBL" id="CP001956">
    <property type="protein sequence ID" value="ADE03170.1"/>
    <property type="molecule type" value="Genomic_DNA"/>
</dbReference>
<dbReference type="EMBL" id="AOHU01000104">
    <property type="protein sequence ID" value="ELY24606.1"/>
    <property type="molecule type" value="Genomic_DNA"/>
</dbReference>
<dbReference type="RefSeq" id="WP_004044909.1">
    <property type="nucleotide sequence ID" value="NC_013967.1"/>
</dbReference>
<dbReference type="SMR" id="D4GY98"/>
<dbReference type="STRING" id="309800.HVO_3000"/>
<dbReference type="PaxDb" id="309800-C498_18165"/>
<dbReference type="EnsemblBacteria" id="ADE03170">
    <property type="protein sequence ID" value="ADE03170"/>
    <property type="gene ID" value="HVO_3000"/>
</dbReference>
<dbReference type="GeneID" id="8923962"/>
<dbReference type="KEGG" id="hvo:HVO_3000"/>
<dbReference type="PATRIC" id="fig|309800.29.peg.3531"/>
<dbReference type="eggNOG" id="arCOG04754">
    <property type="taxonomic scope" value="Archaea"/>
</dbReference>
<dbReference type="HOGENOM" id="CLU_007764_2_1_2"/>
<dbReference type="OrthoDB" id="213206at2157"/>
<dbReference type="Proteomes" id="UP000008243">
    <property type="component" value="Chromosome"/>
</dbReference>
<dbReference type="Proteomes" id="UP000011532">
    <property type="component" value="Unassembled WGS sequence"/>
</dbReference>
<dbReference type="GO" id="GO:0005829">
    <property type="term" value="C:cytosol"/>
    <property type="evidence" value="ECO:0007669"/>
    <property type="project" value="TreeGrafter"/>
</dbReference>
<dbReference type="GO" id="GO:0003677">
    <property type="term" value="F:DNA binding"/>
    <property type="evidence" value="ECO:0007669"/>
    <property type="project" value="InterPro"/>
</dbReference>
<dbReference type="GO" id="GO:0003911">
    <property type="term" value="F:DNA ligase (NAD+) activity"/>
    <property type="evidence" value="ECO:0007669"/>
    <property type="project" value="UniProtKB-UniRule"/>
</dbReference>
<dbReference type="GO" id="GO:0046872">
    <property type="term" value="F:metal ion binding"/>
    <property type="evidence" value="ECO:0007669"/>
    <property type="project" value="UniProtKB-KW"/>
</dbReference>
<dbReference type="GO" id="GO:0006281">
    <property type="term" value="P:DNA repair"/>
    <property type="evidence" value="ECO:0007669"/>
    <property type="project" value="UniProtKB-KW"/>
</dbReference>
<dbReference type="GO" id="GO:0006260">
    <property type="term" value="P:DNA replication"/>
    <property type="evidence" value="ECO:0007669"/>
    <property type="project" value="UniProtKB-KW"/>
</dbReference>
<dbReference type="CDD" id="cd17748">
    <property type="entry name" value="BRCT_DNA_ligase_like"/>
    <property type="match status" value="1"/>
</dbReference>
<dbReference type="CDD" id="cd00114">
    <property type="entry name" value="LIGANc"/>
    <property type="match status" value="1"/>
</dbReference>
<dbReference type="FunFam" id="1.10.150.20:FF:000007">
    <property type="entry name" value="DNA ligase"/>
    <property type="match status" value="1"/>
</dbReference>
<dbReference type="FunFam" id="3.30.470.30:FF:000001">
    <property type="entry name" value="DNA ligase"/>
    <property type="match status" value="1"/>
</dbReference>
<dbReference type="Gene3D" id="1.10.150.20">
    <property type="entry name" value="5' to 3' exonuclease, C-terminal subdomain"/>
    <property type="match status" value="2"/>
</dbReference>
<dbReference type="Gene3D" id="3.40.50.10190">
    <property type="entry name" value="BRCT domain"/>
    <property type="match status" value="1"/>
</dbReference>
<dbReference type="Gene3D" id="3.30.470.30">
    <property type="entry name" value="DNA ligase/mRNA capping enzyme"/>
    <property type="match status" value="1"/>
</dbReference>
<dbReference type="Gene3D" id="1.10.287.610">
    <property type="entry name" value="Helix hairpin bin"/>
    <property type="match status" value="1"/>
</dbReference>
<dbReference type="Gene3D" id="2.40.50.140">
    <property type="entry name" value="Nucleic acid-binding proteins"/>
    <property type="match status" value="1"/>
</dbReference>
<dbReference type="HAMAP" id="MF_01588">
    <property type="entry name" value="DNA_ligase_A"/>
    <property type="match status" value="1"/>
</dbReference>
<dbReference type="InterPro" id="IPR001357">
    <property type="entry name" value="BRCT_dom"/>
</dbReference>
<dbReference type="InterPro" id="IPR036420">
    <property type="entry name" value="BRCT_dom_sf"/>
</dbReference>
<dbReference type="InterPro" id="IPR041663">
    <property type="entry name" value="DisA/LigA_HHH"/>
</dbReference>
<dbReference type="InterPro" id="IPR001679">
    <property type="entry name" value="DNA_ligase"/>
</dbReference>
<dbReference type="InterPro" id="IPR018239">
    <property type="entry name" value="DNA_ligase_AS"/>
</dbReference>
<dbReference type="InterPro" id="IPR033136">
    <property type="entry name" value="DNA_ligase_CS"/>
</dbReference>
<dbReference type="InterPro" id="IPR013839">
    <property type="entry name" value="DNAligase_adenylation"/>
</dbReference>
<dbReference type="InterPro" id="IPR013840">
    <property type="entry name" value="DNAligase_N"/>
</dbReference>
<dbReference type="InterPro" id="IPR003583">
    <property type="entry name" value="Hlx-hairpin-Hlx_DNA-bd_motif"/>
</dbReference>
<dbReference type="InterPro" id="IPR012340">
    <property type="entry name" value="NA-bd_OB-fold"/>
</dbReference>
<dbReference type="InterPro" id="IPR004150">
    <property type="entry name" value="NAD_DNA_ligase_OB"/>
</dbReference>
<dbReference type="InterPro" id="IPR010994">
    <property type="entry name" value="RuvA_2-like"/>
</dbReference>
<dbReference type="NCBIfam" id="TIGR00575">
    <property type="entry name" value="dnlj"/>
    <property type="match status" value="1"/>
</dbReference>
<dbReference type="NCBIfam" id="NF005932">
    <property type="entry name" value="PRK07956.1"/>
    <property type="match status" value="1"/>
</dbReference>
<dbReference type="NCBIfam" id="NF010931">
    <property type="entry name" value="PRK14351.1"/>
    <property type="match status" value="1"/>
</dbReference>
<dbReference type="PANTHER" id="PTHR23389">
    <property type="entry name" value="CHROMOSOME TRANSMISSION FIDELITY FACTOR 18"/>
    <property type="match status" value="1"/>
</dbReference>
<dbReference type="PANTHER" id="PTHR23389:SF9">
    <property type="entry name" value="DNA LIGASE"/>
    <property type="match status" value="1"/>
</dbReference>
<dbReference type="Pfam" id="PF00533">
    <property type="entry name" value="BRCT"/>
    <property type="match status" value="1"/>
</dbReference>
<dbReference type="Pfam" id="PF01653">
    <property type="entry name" value="DNA_ligase_aden"/>
    <property type="match status" value="1"/>
</dbReference>
<dbReference type="Pfam" id="PF03120">
    <property type="entry name" value="DNA_ligase_OB"/>
    <property type="match status" value="1"/>
</dbReference>
<dbReference type="Pfam" id="PF12826">
    <property type="entry name" value="HHH_2"/>
    <property type="match status" value="1"/>
</dbReference>
<dbReference type="Pfam" id="PF14520">
    <property type="entry name" value="HHH_5"/>
    <property type="match status" value="1"/>
</dbReference>
<dbReference type="PIRSF" id="PIRSF001604">
    <property type="entry name" value="LigA"/>
    <property type="match status" value="1"/>
</dbReference>
<dbReference type="SMART" id="SM00292">
    <property type="entry name" value="BRCT"/>
    <property type="match status" value="1"/>
</dbReference>
<dbReference type="SMART" id="SM00278">
    <property type="entry name" value="HhH1"/>
    <property type="match status" value="3"/>
</dbReference>
<dbReference type="SMART" id="SM00532">
    <property type="entry name" value="LIGANc"/>
    <property type="match status" value="1"/>
</dbReference>
<dbReference type="SUPFAM" id="SSF52113">
    <property type="entry name" value="BRCT domain"/>
    <property type="match status" value="1"/>
</dbReference>
<dbReference type="SUPFAM" id="SSF56091">
    <property type="entry name" value="DNA ligase/mRNA capping enzyme, catalytic domain"/>
    <property type="match status" value="1"/>
</dbReference>
<dbReference type="SUPFAM" id="SSF50249">
    <property type="entry name" value="Nucleic acid-binding proteins"/>
    <property type="match status" value="1"/>
</dbReference>
<dbReference type="SUPFAM" id="SSF47781">
    <property type="entry name" value="RuvA domain 2-like"/>
    <property type="match status" value="1"/>
</dbReference>
<dbReference type="PROSITE" id="PS50172">
    <property type="entry name" value="BRCT"/>
    <property type="match status" value="1"/>
</dbReference>
<dbReference type="PROSITE" id="PS01055">
    <property type="entry name" value="DNA_LIGASE_N1"/>
    <property type="match status" value="1"/>
</dbReference>
<dbReference type="PROSITE" id="PS01056">
    <property type="entry name" value="DNA_LIGASE_N2"/>
    <property type="match status" value="1"/>
</dbReference>
<keyword id="KW-0227">DNA damage</keyword>
<keyword id="KW-0234">DNA repair</keyword>
<keyword id="KW-0235">DNA replication</keyword>
<keyword id="KW-0436">Ligase</keyword>
<keyword id="KW-0460">Magnesium</keyword>
<keyword id="KW-0464">Manganese</keyword>
<keyword id="KW-0479">Metal-binding</keyword>
<keyword id="KW-0520">NAD</keyword>
<keyword id="KW-1185">Reference proteome</keyword>
<keyword id="KW-0862">Zinc</keyword>
<organism>
    <name type="scientific">Haloferax volcanii (strain ATCC 29605 / DSM 3757 / JCM 8879 / NBRC 14742 / NCIMB 2012 / VKM B-1768 / DS2)</name>
    <name type="common">Halobacterium volcanii</name>
    <dbReference type="NCBI Taxonomy" id="309800"/>
    <lineage>
        <taxon>Archaea</taxon>
        <taxon>Methanobacteriati</taxon>
        <taxon>Methanobacteriota</taxon>
        <taxon>Stenosarchaea group</taxon>
        <taxon>Halobacteria</taxon>
        <taxon>Halobacteriales</taxon>
        <taxon>Haloferacaceae</taxon>
        <taxon>Haloferax</taxon>
    </lineage>
</organism>
<sequence length="699" mass="75811">MSDADVDAESNPYLRDPPTEFEPAESLSREAAEGQAALLREAVREHDHRYYVAADPLVSDAAYDALFSRLVALEDAFDLDTTNSPTNRVGGEPIDALETVEHVAPMLSIDQSTDADDLREFDERVRREVGAVDYVCEPKFDGLSVEVVYEDGEFVRAATRGDGRRGDDVSAQVKTIPTVPLSLRGDHPDRLAVRGEIYMPKSDFSDLNARRVEAGEDAFANPRNAAAGTLRNLDPSVVADRPLAVFFYDILDASARPDSQWAALDRLREWGLRVTDRIERAEDVAEAIDYRDRMQAARDDLDYEIDGTVIKVDSRDARERLGEKSRSVRWAFAYKFPARHEVTTVRDIVVQVGRTGRLTPVAILDPVDVGGVTVSRATLHNPDERAALGVAVGDRVRVKRAGDVIPQVVEVTEDGGGCYEFPDECPVCGSAVDRDGPLAFCSGGLSCPAQREASIGHFAVKGAMDIDGLGEERVAQLVDAGLVETVADLYDLTADDLAELEGWGETSAENLVAAVENAKHPSLDSFLVGLSIPEVGEATARGLAREFGSIEAFPIEADAEEDEFDAFEERLTTVPDVGETVARRVRDFFENADNRAVIRALLDRGVDPEPVESGGDELDGLTFVVTGTLAASRSDVTELVESHGGNVTGSVSGNTDYLVVGENPGRSKRDDAEANDVPTLAETEFEALLAERGVAYPPE</sequence>
<protein>
    <recommendedName>
        <fullName evidence="1">DNA ligase</fullName>
        <ecNumber evidence="1">6.5.1.2</ecNumber>
    </recommendedName>
    <alternativeName>
        <fullName evidence="1">Polydeoxyribonucleotide synthase [NAD(+)]</fullName>
    </alternativeName>
</protein>
<proteinExistence type="evidence at protein level"/>
<evidence type="ECO:0000255" key="1">
    <source>
        <dbReference type="HAMAP-Rule" id="MF_01588"/>
    </source>
</evidence>
<evidence type="ECO:0000256" key="2">
    <source>
        <dbReference type="SAM" id="MobiDB-lite"/>
    </source>
</evidence>
<evidence type="ECO:0000269" key="3">
    <source>
    </source>
</evidence>
<evidence type="ECO:0000269" key="4">
    <source>
    </source>
</evidence>
<evidence type="ECO:0000303" key="5">
    <source>
    </source>
</evidence>
<evidence type="ECO:0000312" key="6">
    <source>
        <dbReference type="EMBL" id="ADE03170.1"/>
    </source>
</evidence>
<evidence type="ECO:0000312" key="7">
    <source>
        <dbReference type="EMBL" id="ELY24606.1"/>
    </source>
</evidence>
<accession>D4GY98</accession>